<gene>
    <name evidence="1" type="primary">pdxS</name>
    <name type="ordered locus">Teth514_2241</name>
</gene>
<sequence>MNERYELNKNLAQMLKGGVIMDVTTPEQAVIAEKAGAVAVMALERVPADIRARGGVARMSDPKIIKEIKAAVSIPVMAKVRIGHFVEAQILEALGIDFIDESEVLTPADEMYHIDKWAFKIPFVCGARNLGEALRRIGEGASMIRTKGEAGTGNVVEAVRHMRIINAEIKRLTTLREDELMAAAKELQAPYDLVKYVAQHGRLPVVNFAAGGIATPADAALMMQLGADGVFVGSGIFKSQNPEKMAEAIVKAVTYYDKPEILAEVSEGLGEAMQSIDIRKLDEKDLYASRGW</sequence>
<feature type="chain" id="PRO_1000188249" description="Pyridoxal 5'-phosphate synthase subunit PdxS">
    <location>
        <begin position="1"/>
        <end position="292"/>
    </location>
</feature>
<feature type="active site" description="Schiff-base intermediate with D-ribose 5-phosphate" evidence="1">
    <location>
        <position position="79"/>
    </location>
</feature>
<feature type="binding site" evidence="1">
    <location>
        <position position="22"/>
    </location>
    <ligand>
        <name>D-ribose 5-phosphate</name>
        <dbReference type="ChEBI" id="CHEBI:78346"/>
    </ligand>
</feature>
<feature type="binding site" evidence="1">
    <location>
        <position position="151"/>
    </location>
    <ligand>
        <name>D-ribose 5-phosphate</name>
        <dbReference type="ChEBI" id="CHEBI:78346"/>
    </ligand>
</feature>
<feature type="binding site" evidence="1">
    <location>
        <position position="163"/>
    </location>
    <ligand>
        <name>D-glyceraldehyde 3-phosphate</name>
        <dbReference type="ChEBI" id="CHEBI:59776"/>
    </ligand>
</feature>
<feature type="binding site" evidence="1">
    <location>
        <position position="212"/>
    </location>
    <ligand>
        <name>D-ribose 5-phosphate</name>
        <dbReference type="ChEBI" id="CHEBI:78346"/>
    </ligand>
</feature>
<feature type="binding site" evidence="1">
    <location>
        <begin position="233"/>
        <end position="234"/>
    </location>
    <ligand>
        <name>D-ribose 5-phosphate</name>
        <dbReference type="ChEBI" id="CHEBI:78346"/>
    </ligand>
</feature>
<organism>
    <name type="scientific">Thermoanaerobacter sp. (strain X514)</name>
    <dbReference type="NCBI Taxonomy" id="399726"/>
    <lineage>
        <taxon>Bacteria</taxon>
        <taxon>Bacillati</taxon>
        <taxon>Bacillota</taxon>
        <taxon>Clostridia</taxon>
        <taxon>Thermoanaerobacterales</taxon>
        <taxon>Thermoanaerobacteraceae</taxon>
        <taxon>Thermoanaerobacter</taxon>
    </lineage>
</organism>
<name>PDXS_THEPX</name>
<dbReference type="EC" id="4.3.3.6" evidence="1"/>
<dbReference type="EMBL" id="CP000923">
    <property type="protein sequence ID" value="ABY93510.1"/>
    <property type="molecule type" value="Genomic_DNA"/>
</dbReference>
<dbReference type="RefSeq" id="WP_009052677.1">
    <property type="nucleotide sequence ID" value="NC_010320.1"/>
</dbReference>
<dbReference type="SMR" id="B0K4N7"/>
<dbReference type="KEGG" id="tex:Teth514_2241"/>
<dbReference type="HOGENOM" id="CLU_055352_1_0_9"/>
<dbReference type="UniPathway" id="UPA00245"/>
<dbReference type="Proteomes" id="UP000002155">
    <property type="component" value="Chromosome"/>
</dbReference>
<dbReference type="GO" id="GO:0036381">
    <property type="term" value="F:pyridoxal 5'-phosphate synthase (glutamine hydrolysing) activity"/>
    <property type="evidence" value="ECO:0007669"/>
    <property type="project" value="UniProtKB-UniRule"/>
</dbReference>
<dbReference type="GO" id="GO:0006520">
    <property type="term" value="P:amino acid metabolic process"/>
    <property type="evidence" value="ECO:0007669"/>
    <property type="project" value="TreeGrafter"/>
</dbReference>
<dbReference type="GO" id="GO:0042823">
    <property type="term" value="P:pyridoxal phosphate biosynthetic process"/>
    <property type="evidence" value="ECO:0007669"/>
    <property type="project" value="UniProtKB-UniRule"/>
</dbReference>
<dbReference type="GO" id="GO:0008615">
    <property type="term" value="P:pyridoxine biosynthetic process"/>
    <property type="evidence" value="ECO:0007669"/>
    <property type="project" value="TreeGrafter"/>
</dbReference>
<dbReference type="CDD" id="cd04727">
    <property type="entry name" value="pdxS"/>
    <property type="match status" value="1"/>
</dbReference>
<dbReference type="FunFam" id="3.20.20.70:FF:000001">
    <property type="entry name" value="Pyridoxine biosynthesis protein PDX1"/>
    <property type="match status" value="1"/>
</dbReference>
<dbReference type="Gene3D" id="3.20.20.70">
    <property type="entry name" value="Aldolase class I"/>
    <property type="match status" value="1"/>
</dbReference>
<dbReference type="HAMAP" id="MF_01824">
    <property type="entry name" value="PdxS"/>
    <property type="match status" value="1"/>
</dbReference>
<dbReference type="InterPro" id="IPR013785">
    <property type="entry name" value="Aldolase_TIM"/>
</dbReference>
<dbReference type="InterPro" id="IPR001852">
    <property type="entry name" value="PdxS/SNZ"/>
</dbReference>
<dbReference type="InterPro" id="IPR033755">
    <property type="entry name" value="PdxS/SNZ_N"/>
</dbReference>
<dbReference type="InterPro" id="IPR011060">
    <property type="entry name" value="RibuloseP-bd_barrel"/>
</dbReference>
<dbReference type="NCBIfam" id="NF003215">
    <property type="entry name" value="PRK04180.1"/>
    <property type="match status" value="1"/>
</dbReference>
<dbReference type="NCBIfam" id="TIGR00343">
    <property type="entry name" value="pyridoxal 5'-phosphate synthase lyase subunit PdxS"/>
    <property type="match status" value="1"/>
</dbReference>
<dbReference type="PANTHER" id="PTHR31829">
    <property type="entry name" value="PYRIDOXAL 5'-PHOSPHATE SYNTHASE SUBUNIT SNZ1-RELATED"/>
    <property type="match status" value="1"/>
</dbReference>
<dbReference type="PANTHER" id="PTHR31829:SF0">
    <property type="entry name" value="PYRIDOXAL 5'-PHOSPHATE SYNTHASE SUBUNIT SNZ1-RELATED"/>
    <property type="match status" value="1"/>
</dbReference>
<dbReference type="Pfam" id="PF01680">
    <property type="entry name" value="SOR_SNZ"/>
    <property type="match status" value="1"/>
</dbReference>
<dbReference type="PIRSF" id="PIRSF029271">
    <property type="entry name" value="Pdx1"/>
    <property type="match status" value="1"/>
</dbReference>
<dbReference type="SUPFAM" id="SSF51366">
    <property type="entry name" value="Ribulose-phoshate binding barrel"/>
    <property type="match status" value="1"/>
</dbReference>
<dbReference type="PROSITE" id="PS01235">
    <property type="entry name" value="PDXS_SNZ_1"/>
    <property type="match status" value="1"/>
</dbReference>
<dbReference type="PROSITE" id="PS51129">
    <property type="entry name" value="PDXS_SNZ_2"/>
    <property type="match status" value="1"/>
</dbReference>
<comment type="function">
    <text evidence="1">Catalyzes the formation of pyridoxal 5'-phosphate from ribose 5-phosphate (RBP), glyceraldehyde 3-phosphate (G3P) and ammonia. The ammonia is provided by the PdxT subunit. Can also use ribulose 5-phosphate and dihydroxyacetone phosphate as substrates, resulting from enzyme-catalyzed isomerization of RBP and G3P, respectively.</text>
</comment>
<comment type="catalytic activity">
    <reaction evidence="1">
        <text>aldehydo-D-ribose 5-phosphate + D-glyceraldehyde 3-phosphate + L-glutamine = pyridoxal 5'-phosphate + L-glutamate + phosphate + 3 H2O + H(+)</text>
        <dbReference type="Rhea" id="RHEA:31507"/>
        <dbReference type="ChEBI" id="CHEBI:15377"/>
        <dbReference type="ChEBI" id="CHEBI:15378"/>
        <dbReference type="ChEBI" id="CHEBI:29985"/>
        <dbReference type="ChEBI" id="CHEBI:43474"/>
        <dbReference type="ChEBI" id="CHEBI:58273"/>
        <dbReference type="ChEBI" id="CHEBI:58359"/>
        <dbReference type="ChEBI" id="CHEBI:59776"/>
        <dbReference type="ChEBI" id="CHEBI:597326"/>
        <dbReference type="EC" id="4.3.3.6"/>
    </reaction>
</comment>
<comment type="pathway">
    <text evidence="1">Cofactor biosynthesis; pyridoxal 5'-phosphate biosynthesis.</text>
</comment>
<comment type="subunit">
    <text evidence="1">In the presence of PdxT, forms a dodecamer of heterodimers.</text>
</comment>
<comment type="similarity">
    <text evidence="1">Belongs to the PdxS/SNZ family.</text>
</comment>
<evidence type="ECO:0000255" key="1">
    <source>
        <dbReference type="HAMAP-Rule" id="MF_01824"/>
    </source>
</evidence>
<keyword id="KW-0456">Lyase</keyword>
<keyword id="KW-0663">Pyridoxal phosphate</keyword>
<keyword id="KW-0704">Schiff base</keyword>
<reference key="1">
    <citation type="submission" date="2008-01" db="EMBL/GenBank/DDBJ databases">
        <title>Complete sequence of Thermoanaerobacter sp. X514.</title>
        <authorList>
            <consortium name="US DOE Joint Genome Institute"/>
            <person name="Copeland A."/>
            <person name="Lucas S."/>
            <person name="Lapidus A."/>
            <person name="Barry K."/>
            <person name="Glavina del Rio T."/>
            <person name="Dalin E."/>
            <person name="Tice H."/>
            <person name="Pitluck S."/>
            <person name="Bruce D."/>
            <person name="Goodwin L."/>
            <person name="Saunders E."/>
            <person name="Brettin T."/>
            <person name="Detter J.C."/>
            <person name="Han C."/>
            <person name="Schmutz J."/>
            <person name="Larimer F."/>
            <person name="Land M."/>
            <person name="Hauser L."/>
            <person name="Kyrpides N."/>
            <person name="Kim E."/>
            <person name="Hemme C."/>
            <person name="Fields M.W."/>
            <person name="He Z."/>
            <person name="Zhou J."/>
            <person name="Richardson P."/>
        </authorList>
    </citation>
    <scope>NUCLEOTIDE SEQUENCE [LARGE SCALE GENOMIC DNA]</scope>
    <source>
        <strain>X514</strain>
    </source>
</reference>
<proteinExistence type="inferred from homology"/>
<protein>
    <recommendedName>
        <fullName evidence="1">Pyridoxal 5'-phosphate synthase subunit PdxS</fullName>
        <shortName evidence="1">PLP synthase subunit PdxS</shortName>
        <ecNumber evidence="1">4.3.3.6</ecNumber>
    </recommendedName>
    <alternativeName>
        <fullName evidence="1">Pdx1</fullName>
    </alternativeName>
</protein>
<accession>B0K4N7</accession>